<name>DNAK_SHESA</name>
<protein>
    <recommendedName>
        <fullName evidence="1">Chaperone protein DnaK</fullName>
    </recommendedName>
    <alternativeName>
        <fullName evidence="1">HSP70</fullName>
    </alternativeName>
    <alternativeName>
        <fullName evidence="1">Heat shock 70 kDa protein</fullName>
    </alternativeName>
    <alternativeName>
        <fullName evidence="1">Heat shock protein 70</fullName>
    </alternativeName>
</protein>
<keyword id="KW-0067">ATP-binding</keyword>
<keyword id="KW-0143">Chaperone</keyword>
<keyword id="KW-0547">Nucleotide-binding</keyword>
<keyword id="KW-0597">Phosphoprotein</keyword>
<keyword id="KW-0346">Stress response</keyword>
<proteinExistence type="inferred from homology"/>
<organism>
    <name type="scientific">Shewanella sp. (strain ANA-3)</name>
    <dbReference type="NCBI Taxonomy" id="94122"/>
    <lineage>
        <taxon>Bacteria</taxon>
        <taxon>Pseudomonadati</taxon>
        <taxon>Pseudomonadota</taxon>
        <taxon>Gammaproteobacteria</taxon>
        <taxon>Alteromonadales</taxon>
        <taxon>Shewanellaceae</taxon>
        <taxon>Shewanella</taxon>
    </lineage>
</organism>
<feature type="chain" id="PRO_1000059665" description="Chaperone protein DnaK">
    <location>
        <begin position="1"/>
        <end position="639"/>
    </location>
</feature>
<feature type="region of interest" description="Disordered" evidence="2">
    <location>
        <begin position="603"/>
        <end position="639"/>
    </location>
</feature>
<feature type="compositionally biased region" description="Low complexity" evidence="2">
    <location>
        <begin position="603"/>
        <end position="618"/>
    </location>
</feature>
<feature type="compositionally biased region" description="Acidic residues" evidence="2">
    <location>
        <begin position="625"/>
        <end position="639"/>
    </location>
</feature>
<feature type="modified residue" description="Phosphothreonine; by autocatalysis" evidence="1">
    <location>
        <position position="198"/>
    </location>
</feature>
<accession>A0KTS5</accession>
<evidence type="ECO:0000255" key="1">
    <source>
        <dbReference type="HAMAP-Rule" id="MF_00332"/>
    </source>
</evidence>
<evidence type="ECO:0000256" key="2">
    <source>
        <dbReference type="SAM" id="MobiDB-lite"/>
    </source>
</evidence>
<gene>
    <name evidence="1" type="primary">dnaK</name>
    <name type="ordered locus">Shewana3_0959</name>
</gene>
<dbReference type="EMBL" id="CP000469">
    <property type="protein sequence ID" value="ABK47194.1"/>
    <property type="molecule type" value="Genomic_DNA"/>
</dbReference>
<dbReference type="RefSeq" id="WP_011716085.1">
    <property type="nucleotide sequence ID" value="NC_008577.1"/>
</dbReference>
<dbReference type="SMR" id="A0KTS5"/>
<dbReference type="STRING" id="94122.Shewana3_0959"/>
<dbReference type="GeneID" id="94726940"/>
<dbReference type="KEGG" id="shn:Shewana3_0959"/>
<dbReference type="eggNOG" id="COG0443">
    <property type="taxonomic scope" value="Bacteria"/>
</dbReference>
<dbReference type="HOGENOM" id="CLU_005965_2_1_6"/>
<dbReference type="OrthoDB" id="9766019at2"/>
<dbReference type="Proteomes" id="UP000002589">
    <property type="component" value="Chromosome"/>
</dbReference>
<dbReference type="GO" id="GO:0005524">
    <property type="term" value="F:ATP binding"/>
    <property type="evidence" value="ECO:0007669"/>
    <property type="project" value="UniProtKB-UniRule"/>
</dbReference>
<dbReference type="GO" id="GO:0140662">
    <property type="term" value="F:ATP-dependent protein folding chaperone"/>
    <property type="evidence" value="ECO:0007669"/>
    <property type="project" value="InterPro"/>
</dbReference>
<dbReference type="GO" id="GO:0051082">
    <property type="term" value="F:unfolded protein binding"/>
    <property type="evidence" value="ECO:0007669"/>
    <property type="project" value="InterPro"/>
</dbReference>
<dbReference type="CDD" id="cd10234">
    <property type="entry name" value="ASKHA_NBD_HSP70_DnaK-like"/>
    <property type="match status" value="1"/>
</dbReference>
<dbReference type="FunFam" id="2.60.34.10:FF:000014">
    <property type="entry name" value="Chaperone protein DnaK HSP70"/>
    <property type="match status" value="1"/>
</dbReference>
<dbReference type="FunFam" id="3.30.30.30:FF:000003">
    <property type="entry name" value="Heat shock protein 9"/>
    <property type="match status" value="1"/>
</dbReference>
<dbReference type="FunFam" id="1.20.1270.10:FF:000001">
    <property type="entry name" value="Molecular chaperone DnaK"/>
    <property type="match status" value="1"/>
</dbReference>
<dbReference type="FunFam" id="3.30.420.40:FF:000004">
    <property type="entry name" value="Molecular chaperone DnaK"/>
    <property type="match status" value="1"/>
</dbReference>
<dbReference type="FunFam" id="3.90.640.10:FF:000003">
    <property type="entry name" value="Molecular chaperone DnaK"/>
    <property type="match status" value="1"/>
</dbReference>
<dbReference type="Gene3D" id="1.20.1270.10">
    <property type="match status" value="1"/>
</dbReference>
<dbReference type="Gene3D" id="3.30.420.40">
    <property type="match status" value="2"/>
</dbReference>
<dbReference type="Gene3D" id="3.90.640.10">
    <property type="entry name" value="Actin, Chain A, domain 4"/>
    <property type="match status" value="1"/>
</dbReference>
<dbReference type="Gene3D" id="2.60.34.10">
    <property type="entry name" value="Substrate Binding Domain Of DNAk, Chain A, domain 1"/>
    <property type="match status" value="1"/>
</dbReference>
<dbReference type="HAMAP" id="MF_00332">
    <property type="entry name" value="DnaK"/>
    <property type="match status" value="1"/>
</dbReference>
<dbReference type="InterPro" id="IPR043129">
    <property type="entry name" value="ATPase_NBD"/>
</dbReference>
<dbReference type="InterPro" id="IPR012725">
    <property type="entry name" value="Chaperone_DnaK"/>
</dbReference>
<dbReference type="InterPro" id="IPR018181">
    <property type="entry name" value="Heat_shock_70_CS"/>
</dbReference>
<dbReference type="InterPro" id="IPR029048">
    <property type="entry name" value="HSP70_C_sf"/>
</dbReference>
<dbReference type="InterPro" id="IPR029047">
    <property type="entry name" value="HSP70_peptide-bd_sf"/>
</dbReference>
<dbReference type="InterPro" id="IPR013126">
    <property type="entry name" value="Hsp_70_fam"/>
</dbReference>
<dbReference type="NCBIfam" id="NF001413">
    <property type="entry name" value="PRK00290.1"/>
    <property type="match status" value="1"/>
</dbReference>
<dbReference type="NCBIfam" id="NF003520">
    <property type="entry name" value="PRK05183.1"/>
    <property type="match status" value="1"/>
</dbReference>
<dbReference type="NCBIfam" id="TIGR02350">
    <property type="entry name" value="prok_dnaK"/>
    <property type="match status" value="1"/>
</dbReference>
<dbReference type="PANTHER" id="PTHR19375">
    <property type="entry name" value="HEAT SHOCK PROTEIN 70KDA"/>
    <property type="match status" value="1"/>
</dbReference>
<dbReference type="Pfam" id="PF00012">
    <property type="entry name" value="HSP70"/>
    <property type="match status" value="1"/>
</dbReference>
<dbReference type="PRINTS" id="PR00301">
    <property type="entry name" value="HEATSHOCK70"/>
</dbReference>
<dbReference type="SUPFAM" id="SSF53067">
    <property type="entry name" value="Actin-like ATPase domain"/>
    <property type="match status" value="2"/>
</dbReference>
<dbReference type="SUPFAM" id="SSF100920">
    <property type="entry name" value="Heat shock protein 70kD (HSP70), peptide-binding domain"/>
    <property type="match status" value="1"/>
</dbReference>
<dbReference type="PROSITE" id="PS00297">
    <property type="entry name" value="HSP70_1"/>
    <property type="match status" value="1"/>
</dbReference>
<dbReference type="PROSITE" id="PS00329">
    <property type="entry name" value="HSP70_2"/>
    <property type="match status" value="1"/>
</dbReference>
<dbReference type="PROSITE" id="PS01036">
    <property type="entry name" value="HSP70_3"/>
    <property type="match status" value="1"/>
</dbReference>
<comment type="function">
    <text evidence="1">Acts as a chaperone.</text>
</comment>
<comment type="induction">
    <text evidence="1">By stress conditions e.g. heat shock.</text>
</comment>
<comment type="similarity">
    <text evidence="1">Belongs to the heat shock protein 70 family.</text>
</comment>
<reference key="1">
    <citation type="submission" date="2006-09" db="EMBL/GenBank/DDBJ databases">
        <title>Complete sequence of chromosome 1 of Shewanella sp. ANA-3.</title>
        <authorList>
            <person name="Copeland A."/>
            <person name="Lucas S."/>
            <person name="Lapidus A."/>
            <person name="Barry K."/>
            <person name="Detter J.C."/>
            <person name="Glavina del Rio T."/>
            <person name="Hammon N."/>
            <person name="Israni S."/>
            <person name="Dalin E."/>
            <person name="Tice H."/>
            <person name="Pitluck S."/>
            <person name="Chertkov O."/>
            <person name="Brettin T."/>
            <person name="Bruce D."/>
            <person name="Han C."/>
            <person name="Tapia R."/>
            <person name="Gilna P."/>
            <person name="Schmutz J."/>
            <person name="Larimer F."/>
            <person name="Land M."/>
            <person name="Hauser L."/>
            <person name="Kyrpides N."/>
            <person name="Kim E."/>
            <person name="Newman D."/>
            <person name="Salticov C."/>
            <person name="Konstantinidis K."/>
            <person name="Klappenback J."/>
            <person name="Tiedje J."/>
            <person name="Richardson P."/>
        </authorList>
    </citation>
    <scope>NUCLEOTIDE SEQUENCE [LARGE SCALE GENOMIC DNA]</scope>
    <source>
        <strain>ANA-3</strain>
    </source>
</reference>
<sequence>MGKIIGIDLGTTNSCVAVLDGGKARVLENAEGDRTTPSIIAYTDDETIVGQPAKRQAVTNPNNTFFAIKRLIGRRFKDDEVQRDVNIMPFKIIAADNGDAWVESRGNKMAPPQVSAEILKKMKKTAEDFLGEEVTEAVITVPAYFNDSQRQATKDAGRIAGLEVKRIINEPTAAALAYGIDKKQGDNIVAVYDLGGGTFDISIIEIDSNDGDQTFEVLATNGDTHLGGEDFDNRLINYLADEFKKEQGLDLRKDPLAMQRLKEAAEKAKIELSSTNQTEVNLPYITADATGPKHLVVKITRAKLESLVEDLIIRTLEPLKVALADADLSVSDINEVILVGGQTRMPKVQEAVSNFFGKEPRKDVNPDEAVAVGAAIQAGVLSGDVKDVLLLDVTPLSLGIETMGSVMTKLIEKNTTIPTKAQQVFSTADDNQSAVTIHVLQGERKQASANKSLGQFNLDGIEPAPRGMPQIEVMFDIDADGILHVSATDKKTGKKQNITIKASSGLSEEEVAQMVRDAEAHAEEDKKFEELVQSRNQADGLVHATKKQVEEAGDALPADDKAKIEAAMSAVEVATKGNDKEAIEKATQELIEASAKLMEIAQAKAQTQGGAQEGAAKQSNATADDVVDAEFEEVKDDKK</sequence>